<sequence>MLRLKFNSTRRLTALATKHKPSSGIYSFHLQNKFIQSQRFQSTTNDFNTNAINSDSKNLEELDVNKTVSSAPQPWYLTMVKREKLVENNTILEDQVVKYPENSPGSLISIIEMLKTELGLTDILIFDLREKETNNEYNYPTAAAKISDFMVLSTAQSTKHCEKCFVELNKMMKQKFNSIASVEGNINSNDERKKQKRLARKRNLERSSLAKNPTTSTSRDSWYLVDCHLDNIFVNILTKNRRKELNLEELYAPKEEREKYRYDNSRSDLELSDEYSSGNNILSGLRKIALQRRRAYSTLANPSQLSPDIAFDILKGLNKDNLHIKLKELDQLKSASSLTDIDTLNFLSSAAKQLSNKQEKKVYFKGLQKMFESQWPLIIPRTNSDEFWSARSNFYKSCFELNPQQFSLKDYFINCLLIKRVSGFKVEEKDLINFFNILSSSLLSNEKSNYWNLIKSNNLVVSALNLIDDERIIKNSQFIDTLLNTMIIDENKHSRALYEIVDYLVYNSERSNKALEIPMITIIINALCRVQNWSKLWQFWDILGKNANYRNDFRPWAEYLRLINKNGNETVHRKIIEDGQLLWIVRNDVPLTKELTDQLSKFFSLSNDEGIETDTVKELILNAKPSPV</sequence>
<proteinExistence type="inferred from homology"/>
<comment type="function">
    <text evidence="1">Probable mitochondrial mRNA stabilization factor.</text>
</comment>
<comment type="subcellular location">
    <subcellularLocation>
        <location evidence="1">Mitochondrion inner membrane</location>
        <topology evidence="1">Peripheral membrane protein</topology>
        <orientation evidence="1">Matrix side</orientation>
    </subcellularLocation>
</comment>
<comment type="similarity">
    <text evidence="4">Belongs to the ATP25 family.</text>
</comment>
<gene>
    <name type="primary">ATP25</name>
    <name type="ORF">Kpol_467p13</name>
</gene>
<reference key="1">
    <citation type="journal article" date="2007" name="Proc. Natl. Acad. Sci. U.S.A.">
        <title>Independent sorting-out of thousands of duplicated gene pairs in two yeast species descended from a whole-genome duplication.</title>
        <authorList>
            <person name="Scannell D.R."/>
            <person name="Frank A.C."/>
            <person name="Conant G.C."/>
            <person name="Byrne K.P."/>
            <person name="Woolfit M."/>
            <person name="Wolfe K.H."/>
        </authorList>
    </citation>
    <scope>NUCLEOTIDE SEQUENCE [LARGE SCALE GENOMIC DNA]</scope>
    <source>
        <strain>ATCC 22028 / DSM 70294 / BCRC 21397 / CBS 2163 / NBRC 10782 / NRRL Y-8283 / UCD 57-17</strain>
    </source>
</reference>
<accession>A7TQF7</accession>
<name>ATP25_VANPO</name>
<dbReference type="EMBL" id="DS480457">
    <property type="protein sequence ID" value="EDO15501.1"/>
    <property type="molecule type" value="Genomic_DNA"/>
</dbReference>
<dbReference type="RefSeq" id="XP_001643359.1">
    <property type="nucleotide sequence ID" value="XM_001643309.1"/>
</dbReference>
<dbReference type="SMR" id="A7TQF7"/>
<dbReference type="FunCoup" id="A7TQF7">
    <property type="interactions" value="96"/>
</dbReference>
<dbReference type="STRING" id="436907.A7TQF7"/>
<dbReference type="GeneID" id="5543579"/>
<dbReference type="KEGG" id="vpo:Kpol_467p13"/>
<dbReference type="eggNOG" id="ENOG502RGZN">
    <property type="taxonomic scope" value="Eukaryota"/>
</dbReference>
<dbReference type="HOGENOM" id="CLU_487522_0_0_1"/>
<dbReference type="InParanoid" id="A7TQF7"/>
<dbReference type="OMA" id="SWYMIDC"/>
<dbReference type="OrthoDB" id="107372at2759"/>
<dbReference type="PhylomeDB" id="A7TQF7"/>
<dbReference type="Proteomes" id="UP000000267">
    <property type="component" value="Unassembled WGS sequence"/>
</dbReference>
<dbReference type="GO" id="GO:0005743">
    <property type="term" value="C:mitochondrial inner membrane"/>
    <property type="evidence" value="ECO:0007669"/>
    <property type="project" value="UniProtKB-SubCell"/>
</dbReference>
<dbReference type="GO" id="GO:0140053">
    <property type="term" value="P:mitochondrial gene expression"/>
    <property type="evidence" value="ECO:0007669"/>
    <property type="project" value="InterPro"/>
</dbReference>
<dbReference type="GO" id="GO:0033615">
    <property type="term" value="P:mitochondrial proton-transporting ATP synthase complex assembly"/>
    <property type="evidence" value="ECO:0007669"/>
    <property type="project" value="EnsemblFungi"/>
</dbReference>
<dbReference type="GO" id="GO:0048255">
    <property type="term" value="P:mRNA stabilization"/>
    <property type="evidence" value="ECO:0007669"/>
    <property type="project" value="EnsemblFungi"/>
</dbReference>
<dbReference type="Gene3D" id="3.30.460.10">
    <property type="entry name" value="Beta Polymerase, domain 2"/>
    <property type="match status" value="1"/>
</dbReference>
<dbReference type="InterPro" id="IPR040152">
    <property type="entry name" value="Atp25"/>
</dbReference>
<dbReference type="InterPro" id="IPR025210">
    <property type="entry name" value="ATP25_mRNA_stabil_dom"/>
</dbReference>
<dbReference type="InterPro" id="IPR043519">
    <property type="entry name" value="NT_sf"/>
</dbReference>
<dbReference type="PANTHER" id="PTHR28087">
    <property type="entry name" value="ATPASE SYNTHESIS PROTEIN 25, MITOCHONDRIAL"/>
    <property type="match status" value="1"/>
</dbReference>
<dbReference type="PANTHER" id="PTHR28087:SF1">
    <property type="entry name" value="ATPASE SYNTHESIS PROTEIN 25, MITOCHONDRIAL"/>
    <property type="match status" value="1"/>
</dbReference>
<dbReference type="Pfam" id="PF13929">
    <property type="entry name" value="mRNA_stabil"/>
    <property type="match status" value="1"/>
</dbReference>
<dbReference type="Pfam" id="PF02410">
    <property type="entry name" value="RsfS"/>
    <property type="match status" value="1"/>
</dbReference>
<dbReference type="SUPFAM" id="SSF81301">
    <property type="entry name" value="Nucleotidyltransferase"/>
    <property type="match status" value="1"/>
</dbReference>
<keyword id="KW-0472">Membrane</keyword>
<keyword id="KW-0496">Mitochondrion</keyword>
<keyword id="KW-0999">Mitochondrion inner membrane</keyword>
<keyword id="KW-1185">Reference proteome</keyword>
<keyword id="KW-0809">Transit peptide</keyword>
<feature type="transit peptide" description="Mitochondrion" evidence="2">
    <location>
        <begin position="1"/>
        <end position="40"/>
    </location>
</feature>
<feature type="chain" id="PRO_0000404490" description="ATPase synthesis protein 25, mitochondrial">
    <location>
        <begin position="41"/>
        <end position="628"/>
    </location>
</feature>
<feature type="region of interest" description="Disordered" evidence="3">
    <location>
        <begin position="187"/>
        <end position="218"/>
    </location>
</feature>
<feature type="compositionally biased region" description="Basic residues" evidence="3">
    <location>
        <begin position="194"/>
        <end position="203"/>
    </location>
</feature>
<feature type="compositionally biased region" description="Polar residues" evidence="3">
    <location>
        <begin position="209"/>
        <end position="218"/>
    </location>
</feature>
<organism>
    <name type="scientific">Vanderwaltozyma polyspora (strain ATCC 22028 / DSM 70294 / BCRC 21397 / CBS 2163 / NBRC 10782 / NRRL Y-8283 / UCD 57-17)</name>
    <name type="common">Kluyveromyces polysporus</name>
    <dbReference type="NCBI Taxonomy" id="436907"/>
    <lineage>
        <taxon>Eukaryota</taxon>
        <taxon>Fungi</taxon>
        <taxon>Dikarya</taxon>
        <taxon>Ascomycota</taxon>
        <taxon>Saccharomycotina</taxon>
        <taxon>Saccharomycetes</taxon>
        <taxon>Saccharomycetales</taxon>
        <taxon>Saccharomycetaceae</taxon>
        <taxon>Vanderwaltozyma</taxon>
    </lineage>
</organism>
<protein>
    <recommendedName>
        <fullName>ATPase synthesis protein 25, mitochondrial</fullName>
    </recommendedName>
</protein>
<evidence type="ECO:0000250" key="1"/>
<evidence type="ECO:0000255" key="2"/>
<evidence type="ECO:0000256" key="3">
    <source>
        <dbReference type="SAM" id="MobiDB-lite"/>
    </source>
</evidence>
<evidence type="ECO:0000305" key="4"/>